<reference key="1">
    <citation type="journal article" date="2004" name="Nature">
        <title>Genome evolution in yeasts.</title>
        <authorList>
            <person name="Dujon B."/>
            <person name="Sherman D."/>
            <person name="Fischer G."/>
            <person name="Durrens P."/>
            <person name="Casaregola S."/>
            <person name="Lafontaine I."/>
            <person name="de Montigny J."/>
            <person name="Marck C."/>
            <person name="Neuveglise C."/>
            <person name="Talla E."/>
            <person name="Goffard N."/>
            <person name="Frangeul L."/>
            <person name="Aigle M."/>
            <person name="Anthouard V."/>
            <person name="Babour A."/>
            <person name="Barbe V."/>
            <person name="Barnay S."/>
            <person name="Blanchin S."/>
            <person name="Beckerich J.-M."/>
            <person name="Beyne E."/>
            <person name="Bleykasten C."/>
            <person name="Boisrame A."/>
            <person name="Boyer J."/>
            <person name="Cattolico L."/>
            <person name="Confanioleri F."/>
            <person name="de Daruvar A."/>
            <person name="Despons L."/>
            <person name="Fabre E."/>
            <person name="Fairhead C."/>
            <person name="Ferry-Dumazet H."/>
            <person name="Groppi A."/>
            <person name="Hantraye F."/>
            <person name="Hennequin C."/>
            <person name="Jauniaux N."/>
            <person name="Joyet P."/>
            <person name="Kachouri R."/>
            <person name="Kerrest A."/>
            <person name="Koszul R."/>
            <person name="Lemaire M."/>
            <person name="Lesur I."/>
            <person name="Ma L."/>
            <person name="Muller H."/>
            <person name="Nicaud J.-M."/>
            <person name="Nikolski M."/>
            <person name="Oztas S."/>
            <person name="Ozier-Kalogeropoulos O."/>
            <person name="Pellenz S."/>
            <person name="Potier S."/>
            <person name="Richard G.-F."/>
            <person name="Straub M.-L."/>
            <person name="Suleau A."/>
            <person name="Swennen D."/>
            <person name="Tekaia F."/>
            <person name="Wesolowski-Louvel M."/>
            <person name="Westhof E."/>
            <person name="Wirth B."/>
            <person name="Zeniou-Meyer M."/>
            <person name="Zivanovic Y."/>
            <person name="Bolotin-Fukuhara M."/>
            <person name="Thierry A."/>
            <person name="Bouchier C."/>
            <person name="Caudron B."/>
            <person name="Scarpelli C."/>
            <person name="Gaillardin C."/>
            <person name="Weissenbach J."/>
            <person name="Wincker P."/>
            <person name="Souciet J.-L."/>
        </authorList>
    </citation>
    <scope>NUCLEOTIDE SEQUENCE [LARGE SCALE GENOMIC DNA]</scope>
    <source>
        <strain>ATCC 2001 / BCRC 20586 / JCM 3761 / NBRC 0622 / NRRL Y-65 / CBS 138</strain>
    </source>
</reference>
<evidence type="ECO:0000250" key="1"/>
<evidence type="ECO:0000250" key="2">
    <source>
        <dbReference type="UniProtKB" id="P38285"/>
    </source>
</evidence>
<evidence type="ECO:0000256" key="3">
    <source>
        <dbReference type="SAM" id="MobiDB-lite"/>
    </source>
</evidence>
<evidence type="ECO:0000305" key="4"/>
<dbReference type="EMBL" id="CR380954">
    <property type="protein sequence ID" value="CAG60056.1"/>
    <property type="molecule type" value="Genomic_DNA"/>
</dbReference>
<dbReference type="RefSeq" id="XP_447123.1">
    <property type="nucleotide sequence ID" value="XM_447123.1"/>
</dbReference>
<dbReference type="SMR" id="Q6FRM1"/>
<dbReference type="FunCoup" id="Q6FRM1">
    <property type="interactions" value="131"/>
</dbReference>
<dbReference type="STRING" id="284593.Q6FRM1"/>
<dbReference type="EnsemblFungi" id="CAGL0H07491g-T">
    <property type="protein sequence ID" value="CAGL0H07491g-T-p1"/>
    <property type="gene ID" value="CAGL0H07491g"/>
</dbReference>
<dbReference type="KEGG" id="cgr:2888591"/>
<dbReference type="CGD" id="CAL0131776">
    <property type="gene designation" value="CAGL0H07491g"/>
</dbReference>
<dbReference type="VEuPathDB" id="FungiDB:CAGL0H07491g"/>
<dbReference type="eggNOG" id="KOG1947">
    <property type="taxonomic scope" value="Eukaryota"/>
</dbReference>
<dbReference type="HOGENOM" id="CLU_031725_1_0_1"/>
<dbReference type="InParanoid" id="Q6FRM1"/>
<dbReference type="OMA" id="IGLAGCH"/>
<dbReference type="Proteomes" id="UP000002428">
    <property type="component" value="Chromosome H"/>
</dbReference>
<dbReference type="GO" id="GO:0005933">
    <property type="term" value="C:cellular bud"/>
    <property type="evidence" value="ECO:0007669"/>
    <property type="project" value="EnsemblFungi"/>
</dbReference>
<dbReference type="GO" id="GO:0005737">
    <property type="term" value="C:cytoplasm"/>
    <property type="evidence" value="ECO:0007669"/>
    <property type="project" value="UniProtKB-SubCell"/>
</dbReference>
<dbReference type="GO" id="GO:0005634">
    <property type="term" value="C:nucleus"/>
    <property type="evidence" value="ECO:0007669"/>
    <property type="project" value="UniProtKB-SubCell"/>
</dbReference>
<dbReference type="GO" id="GO:0019005">
    <property type="term" value="C:SCF ubiquitin ligase complex"/>
    <property type="evidence" value="ECO:0007669"/>
    <property type="project" value="TreeGrafter"/>
</dbReference>
<dbReference type="GO" id="GO:0031267">
    <property type="term" value="F:small GTPase binding"/>
    <property type="evidence" value="ECO:0007669"/>
    <property type="project" value="EnsemblFungi"/>
</dbReference>
<dbReference type="GO" id="GO:0051301">
    <property type="term" value="P:cell division"/>
    <property type="evidence" value="ECO:0007669"/>
    <property type="project" value="UniProtKB-KW"/>
</dbReference>
<dbReference type="GO" id="GO:0007094">
    <property type="term" value="P:mitotic spindle assembly checkpoint signaling"/>
    <property type="evidence" value="ECO:0007669"/>
    <property type="project" value="EnsemblFungi"/>
</dbReference>
<dbReference type="GO" id="GO:0031578">
    <property type="term" value="P:mitotic spindle orientation checkpoint signaling"/>
    <property type="evidence" value="ECO:0007669"/>
    <property type="project" value="EnsemblFungi"/>
</dbReference>
<dbReference type="GO" id="GO:2001042">
    <property type="term" value="P:negative regulation of septum digestion after cytokinesis"/>
    <property type="evidence" value="ECO:0007669"/>
    <property type="project" value="EnsemblFungi"/>
</dbReference>
<dbReference type="GO" id="GO:0032984">
    <property type="term" value="P:protein-containing complex disassembly"/>
    <property type="evidence" value="ECO:0007669"/>
    <property type="project" value="EnsemblFungi"/>
</dbReference>
<dbReference type="GO" id="GO:0031146">
    <property type="term" value="P:SCF-dependent proteasomal ubiquitin-dependent protein catabolic process"/>
    <property type="evidence" value="ECO:0007669"/>
    <property type="project" value="EnsemblFungi"/>
</dbReference>
<dbReference type="CDD" id="cd09293">
    <property type="entry name" value="AMN1"/>
    <property type="match status" value="1"/>
</dbReference>
<dbReference type="Gene3D" id="3.80.10.10">
    <property type="entry name" value="Ribonuclease Inhibitor"/>
    <property type="match status" value="2"/>
</dbReference>
<dbReference type="InterPro" id="IPR001611">
    <property type="entry name" value="Leu-rich_rpt"/>
</dbReference>
<dbReference type="InterPro" id="IPR006553">
    <property type="entry name" value="Leu-rich_rpt_Cys-con_subtyp"/>
</dbReference>
<dbReference type="InterPro" id="IPR032675">
    <property type="entry name" value="LRR_dom_sf"/>
</dbReference>
<dbReference type="PANTHER" id="PTHR13318:SF247">
    <property type="entry name" value="GH16156P"/>
    <property type="match status" value="1"/>
</dbReference>
<dbReference type="PANTHER" id="PTHR13318">
    <property type="entry name" value="PARTNER OF PAIRED, ISOFORM B-RELATED"/>
    <property type="match status" value="1"/>
</dbReference>
<dbReference type="Pfam" id="PF13516">
    <property type="entry name" value="LRR_6"/>
    <property type="match status" value="2"/>
</dbReference>
<dbReference type="SMART" id="SM00367">
    <property type="entry name" value="LRR_CC"/>
    <property type="match status" value="5"/>
</dbReference>
<dbReference type="SUPFAM" id="SSF52047">
    <property type="entry name" value="RNI-like"/>
    <property type="match status" value="1"/>
</dbReference>
<organism>
    <name type="scientific">Candida glabrata (strain ATCC 2001 / BCRC 20586 / JCM 3761 / NBRC 0622 / NRRL Y-65 / CBS 138)</name>
    <name type="common">Yeast</name>
    <name type="synonym">Nakaseomyces glabratus</name>
    <dbReference type="NCBI Taxonomy" id="284593"/>
    <lineage>
        <taxon>Eukaryota</taxon>
        <taxon>Fungi</taxon>
        <taxon>Dikarya</taxon>
        <taxon>Ascomycota</taxon>
        <taxon>Saccharomycotina</taxon>
        <taxon>Saccharomycetes</taxon>
        <taxon>Saccharomycetales</taxon>
        <taxon>Saccharomycetaceae</taxon>
        <taxon>Nakaseomyces</taxon>
    </lineage>
</organism>
<proteinExistence type="inferred from homology"/>
<name>AMN1_CANGA</name>
<comment type="function">
    <text evidence="1">Negative regulator of the mitotic exit network (MEN), required for multiple cell cycle checkpoints. Required for daughter cell separation and chromosome stability. Involved in copper sensitivity.</text>
</comment>
<comment type="subcellular location">
    <subcellularLocation>
        <location evidence="2">Cytoplasm</location>
    </subcellularLocation>
    <subcellularLocation>
        <location evidence="2">Nucleus</location>
    </subcellularLocation>
</comment>
<comment type="similarity">
    <text evidence="4">Belongs to the AMN1 family.</text>
</comment>
<keyword id="KW-0131">Cell cycle</keyword>
<keyword id="KW-0132">Cell division</keyword>
<keyword id="KW-0963">Cytoplasm</keyword>
<keyword id="KW-0498">Mitosis</keyword>
<keyword id="KW-0539">Nucleus</keyword>
<keyword id="KW-1185">Reference proteome</keyword>
<gene>
    <name type="primary">AMN1</name>
    <name type="ordered locus">CAGL0H07491g</name>
</gene>
<protein>
    <recommendedName>
        <fullName>Antagonist of mitotic exit network protein 1</fullName>
    </recommendedName>
</protein>
<accession>Q6FRM1</accession>
<feature type="chain" id="PRO_0000277843" description="Antagonist of mitotic exit network protein 1">
    <location>
        <begin position="1"/>
        <end position="511"/>
    </location>
</feature>
<feature type="region of interest" description="Disordered" evidence="3">
    <location>
        <begin position="27"/>
        <end position="58"/>
    </location>
</feature>
<feature type="region of interest" description="Disordered" evidence="3">
    <location>
        <begin position="99"/>
        <end position="119"/>
    </location>
</feature>
<feature type="compositionally biased region" description="Polar residues" evidence="3">
    <location>
        <begin position="45"/>
        <end position="58"/>
    </location>
</feature>
<feature type="compositionally biased region" description="Low complexity" evidence="3">
    <location>
        <begin position="99"/>
        <end position="112"/>
    </location>
</feature>
<sequence>MVLPDSNIMKNGSIKRLRDSQIENSPYSRPIKKITPNSSHEDLSATISNEGSLNFTPRTSRQESLYNMKKIFQKTYSQTKLGLFSSKKQVNTLETAIPTTPKQQLPTPTTSPEKNNILWSTPNSLTSLRTISNDLDDCRNRNLITDFSELSIINSSSSSIYSTQQSHPIFEIPEIVDNIVKQLYLIENEQDLLNGHHKKDVNRENTSTVVSCLAVSKTWNKVSKGYLMRDLKFTKSTSLTNFLSQCSTKKTTPQSLILHKMSDINNNNSRGLEIIIDPKQLRHLEYYVCPNILPPVNWFQSLTKLEKLILPGNKLINDSYLIQICRYLPNLKVLDLRACDNITDAGIVAVGTHCKQLVSCNIGRHRNGSSITGLSVVALAKNTMIRTLGLAGCDITDASMWELAQKCGKNIERLSLNNCNKLTNFSLPMLFAFNYFPNLNVLEIQNIAKITDVRHMVRYKIWKRSQRIPILIKGCDRITKLIHEEERQIKAQSLKTARKDMTLWVNQLENE</sequence>